<reference key="1">
    <citation type="journal article" date="2006" name="PLoS Genet.">
        <title>Who ate whom? Adaptive Helicobacter genomic changes that accompanied a host jump from early humans to large felines.</title>
        <authorList>
            <person name="Eppinger M."/>
            <person name="Baar C."/>
            <person name="Linz B."/>
            <person name="Raddatz G."/>
            <person name="Lanz C."/>
            <person name="Keller H."/>
            <person name="Morelli G."/>
            <person name="Gressmann H."/>
            <person name="Achtman M."/>
            <person name="Schuster S.C."/>
        </authorList>
    </citation>
    <scope>NUCLEOTIDE SEQUENCE [LARGE SCALE GENOMIC DNA]</scope>
    <source>
        <strain>Sheeba</strain>
    </source>
</reference>
<feature type="chain" id="PRO_0000340782" description="3-hydroxyacyl-[acyl-carrier-protein] dehydratase FabZ">
    <location>
        <begin position="1"/>
        <end position="158"/>
    </location>
</feature>
<feature type="active site" evidence="1">
    <location>
        <position position="57"/>
    </location>
</feature>
<dbReference type="EC" id="4.2.1.59" evidence="1"/>
<dbReference type="EMBL" id="AM260522">
    <property type="protein sequence ID" value="CAJ98924.1"/>
    <property type="molecule type" value="Genomic_DNA"/>
</dbReference>
<dbReference type="RefSeq" id="WP_011577046.1">
    <property type="nucleotide sequence ID" value="NC_008229.1"/>
</dbReference>
<dbReference type="SMR" id="Q17ZK2"/>
<dbReference type="STRING" id="382638.Hac_0062"/>
<dbReference type="GeneID" id="31757611"/>
<dbReference type="KEGG" id="hac:Hac_0062"/>
<dbReference type="eggNOG" id="COG0764">
    <property type="taxonomic scope" value="Bacteria"/>
</dbReference>
<dbReference type="HOGENOM" id="CLU_078912_1_0_7"/>
<dbReference type="OrthoDB" id="9772788at2"/>
<dbReference type="BioCyc" id="HACI382638:HAC_RS00285-MONOMER"/>
<dbReference type="Proteomes" id="UP000000775">
    <property type="component" value="Chromosome"/>
</dbReference>
<dbReference type="GO" id="GO:0005737">
    <property type="term" value="C:cytoplasm"/>
    <property type="evidence" value="ECO:0007669"/>
    <property type="project" value="UniProtKB-SubCell"/>
</dbReference>
<dbReference type="GO" id="GO:0016020">
    <property type="term" value="C:membrane"/>
    <property type="evidence" value="ECO:0007669"/>
    <property type="project" value="GOC"/>
</dbReference>
<dbReference type="GO" id="GO:0019171">
    <property type="term" value="F:(3R)-hydroxyacyl-[acyl-carrier-protein] dehydratase activity"/>
    <property type="evidence" value="ECO:0007669"/>
    <property type="project" value="UniProtKB-EC"/>
</dbReference>
<dbReference type="GO" id="GO:0006633">
    <property type="term" value="P:fatty acid biosynthetic process"/>
    <property type="evidence" value="ECO:0007669"/>
    <property type="project" value="UniProtKB-UniRule"/>
</dbReference>
<dbReference type="GO" id="GO:0009245">
    <property type="term" value="P:lipid A biosynthetic process"/>
    <property type="evidence" value="ECO:0007669"/>
    <property type="project" value="UniProtKB-UniRule"/>
</dbReference>
<dbReference type="CDD" id="cd01288">
    <property type="entry name" value="FabZ"/>
    <property type="match status" value="1"/>
</dbReference>
<dbReference type="FunFam" id="3.10.129.10:FF:000001">
    <property type="entry name" value="3-hydroxyacyl-[acyl-carrier-protein] dehydratase FabZ"/>
    <property type="match status" value="1"/>
</dbReference>
<dbReference type="Gene3D" id="3.10.129.10">
    <property type="entry name" value="Hotdog Thioesterase"/>
    <property type="match status" value="1"/>
</dbReference>
<dbReference type="HAMAP" id="MF_00406">
    <property type="entry name" value="FabZ"/>
    <property type="match status" value="1"/>
</dbReference>
<dbReference type="InterPro" id="IPR013114">
    <property type="entry name" value="FabA_FabZ"/>
</dbReference>
<dbReference type="InterPro" id="IPR010084">
    <property type="entry name" value="FabZ"/>
</dbReference>
<dbReference type="InterPro" id="IPR029069">
    <property type="entry name" value="HotDog_dom_sf"/>
</dbReference>
<dbReference type="NCBIfam" id="TIGR01750">
    <property type="entry name" value="fabZ"/>
    <property type="match status" value="1"/>
</dbReference>
<dbReference type="NCBIfam" id="NF000582">
    <property type="entry name" value="PRK00006.1"/>
    <property type="match status" value="1"/>
</dbReference>
<dbReference type="PANTHER" id="PTHR30272">
    <property type="entry name" value="3-HYDROXYACYL-[ACYL-CARRIER-PROTEIN] DEHYDRATASE"/>
    <property type="match status" value="1"/>
</dbReference>
<dbReference type="PANTHER" id="PTHR30272:SF1">
    <property type="entry name" value="3-HYDROXYACYL-[ACYL-CARRIER-PROTEIN] DEHYDRATASE"/>
    <property type="match status" value="1"/>
</dbReference>
<dbReference type="Pfam" id="PF07977">
    <property type="entry name" value="FabA"/>
    <property type="match status" value="1"/>
</dbReference>
<dbReference type="SUPFAM" id="SSF54637">
    <property type="entry name" value="Thioesterase/thiol ester dehydrase-isomerase"/>
    <property type="match status" value="1"/>
</dbReference>
<proteinExistence type="inferred from homology"/>
<comment type="function">
    <text evidence="1">Involved in unsaturated fatty acids biosynthesis. Catalyzes the dehydration of short chain beta-hydroxyacyl-ACPs and long chain saturated and unsaturated beta-hydroxyacyl-ACPs.</text>
</comment>
<comment type="catalytic activity">
    <reaction evidence="1">
        <text>a (3R)-hydroxyacyl-[ACP] = a (2E)-enoyl-[ACP] + H2O</text>
        <dbReference type="Rhea" id="RHEA:13097"/>
        <dbReference type="Rhea" id="RHEA-COMP:9925"/>
        <dbReference type="Rhea" id="RHEA-COMP:9945"/>
        <dbReference type="ChEBI" id="CHEBI:15377"/>
        <dbReference type="ChEBI" id="CHEBI:78784"/>
        <dbReference type="ChEBI" id="CHEBI:78827"/>
        <dbReference type="EC" id="4.2.1.59"/>
    </reaction>
</comment>
<comment type="subcellular location">
    <subcellularLocation>
        <location evidence="1">Cytoplasm</location>
    </subcellularLocation>
</comment>
<comment type="similarity">
    <text evidence="1">Belongs to the thioester dehydratase family. FabZ subfamily.</text>
</comment>
<evidence type="ECO:0000255" key="1">
    <source>
        <dbReference type="HAMAP-Rule" id="MF_00406"/>
    </source>
</evidence>
<organism>
    <name type="scientific">Helicobacter acinonychis (strain Sheeba)</name>
    <dbReference type="NCBI Taxonomy" id="382638"/>
    <lineage>
        <taxon>Bacteria</taxon>
        <taxon>Pseudomonadati</taxon>
        <taxon>Campylobacterota</taxon>
        <taxon>Epsilonproteobacteria</taxon>
        <taxon>Campylobacterales</taxon>
        <taxon>Helicobacteraceae</taxon>
        <taxon>Helicobacter</taxon>
    </lineage>
</organism>
<name>FABZ_HELAH</name>
<gene>
    <name evidence="1" type="primary">fabZ</name>
    <name type="ordered locus">Hac_0062</name>
</gene>
<accession>Q17ZK2</accession>
<sequence length="158" mass="17931">METSQNPQSQFFIEHILQILPHRYPMLLVDRVVELEANKKIVAYKNITFNEDVFNGHFPNKPIFPGVLIVEGMAQSGGLLAFTSLWGFDPEMAKTKIVYFMTIDKVKFRIPVTPGDKLEYHLEVLKHKGMIWQVGGTAQVDGKVVAEAELKAMIAERD</sequence>
<protein>
    <recommendedName>
        <fullName evidence="1">3-hydroxyacyl-[acyl-carrier-protein] dehydratase FabZ</fullName>
        <ecNumber evidence="1">4.2.1.59</ecNumber>
    </recommendedName>
    <alternativeName>
        <fullName evidence="1">(3R)-hydroxymyristoyl-[acyl-carrier-protein] dehydratase</fullName>
        <shortName evidence="1">(3R)-hydroxymyristoyl-ACP dehydrase</shortName>
    </alternativeName>
    <alternativeName>
        <fullName evidence="1">Beta-hydroxyacyl-ACP dehydratase</fullName>
    </alternativeName>
</protein>
<keyword id="KW-0963">Cytoplasm</keyword>
<keyword id="KW-0441">Lipid A biosynthesis</keyword>
<keyword id="KW-0444">Lipid biosynthesis</keyword>
<keyword id="KW-0443">Lipid metabolism</keyword>
<keyword id="KW-0456">Lyase</keyword>